<accession>P54192</accession>
<accession>A4V4T7</accession>
<accession>B3DMN4</accession>
<accession>Q8MYT1</accession>
<accession>Q9VR97</accession>
<keyword id="KW-1015">Disulfide bond</keyword>
<keyword id="KW-1185">Reference proteome</keyword>
<keyword id="KW-0964">Secreted</keyword>
<keyword id="KW-0732">Signal</keyword>
<evidence type="ECO:0000250" key="1"/>
<evidence type="ECO:0000255" key="2"/>
<evidence type="ECO:0000269" key="3">
    <source>
    </source>
</evidence>
<evidence type="ECO:0000305" key="4"/>
<feature type="signal peptide" evidence="2">
    <location>
        <begin position="1"/>
        <end position="23"/>
    </location>
</feature>
<feature type="chain" id="PRO_0000012587" description="General odorant-binding protein 19d">
    <location>
        <begin position="24"/>
        <end position="150"/>
    </location>
</feature>
<feature type="disulfide bond" evidence="1">
    <location>
        <begin position="41"/>
        <end position="72"/>
    </location>
</feature>
<feature type="disulfide bond" evidence="1">
    <location>
        <begin position="68"/>
        <end position="126"/>
    </location>
</feature>
<feature type="disulfide bond" evidence="1">
    <location>
        <begin position="116"/>
        <end position="135"/>
    </location>
</feature>
<feature type="sequence conflict" description="In Ref. 1; AAC46475." evidence="4" ref="1">
    <original>AA</original>
    <variation>LL</variation>
    <location>
        <begin position="34"/>
        <end position="35"/>
    </location>
</feature>
<feature type="sequence conflict" description="In Ref. 4; AAM29626." evidence="4" ref="4">
    <original>C</original>
    <variation>S</variation>
    <location>
        <position position="41"/>
    </location>
</feature>
<feature type="sequence conflict" description="In Ref. 1; AAC46475." evidence="4" ref="1">
    <original>K</original>
    <variation>R</variation>
    <location>
        <position position="141"/>
    </location>
</feature>
<proteinExistence type="evidence at protein level"/>
<protein>
    <recommendedName>
        <fullName>General odorant-binding protein 19d</fullName>
    </recommendedName>
    <alternativeName>
        <fullName>Odorant-binding protein 19d</fullName>
    </alternativeName>
    <alternativeName>
        <fullName>Pheromone-binding protein-related protein 2</fullName>
        <shortName>PBPRP-2</shortName>
    </alternativeName>
</protein>
<dbReference type="EMBL" id="U05981">
    <property type="protein sequence ID" value="AAC46475.1"/>
    <property type="molecule type" value="mRNA"/>
</dbReference>
<dbReference type="EMBL" id="AE014298">
    <property type="protein sequence ID" value="AAF50907.1"/>
    <property type="molecule type" value="Genomic_DNA"/>
</dbReference>
<dbReference type="EMBL" id="AE014298">
    <property type="protein sequence ID" value="AAO41713.1"/>
    <property type="molecule type" value="Genomic_DNA"/>
</dbReference>
<dbReference type="EMBL" id="AY113621">
    <property type="protein sequence ID" value="AAM29626.1"/>
    <property type="molecule type" value="mRNA"/>
</dbReference>
<dbReference type="EMBL" id="AY118484">
    <property type="protein sequence ID" value="AAM49853.1"/>
    <property type="molecule type" value="mRNA"/>
</dbReference>
<dbReference type="EMBL" id="BT032672">
    <property type="protein sequence ID" value="ACD81686.1"/>
    <property type="status" value="ALT_INIT"/>
    <property type="molecule type" value="mRNA"/>
</dbReference>
<dbReference type="PIR" id="S65395">
    <property type="entry name" value="S65395"/>
</dbReference>
<dbReference type="RefSeq" id="NP_523421.2">
    <property type="nucleotide sequence ID" value="NM_078697.3"/>
</dbReference>
<dbReference type="RefSeq" id="NP_788940.1">
    <property type="nucleotide sequence ID" value="NM_176767.2"/>
</dbReference>
<dbReference type="SMR" id="P54192"/>
<dbReference type="BioGRID" id="59331">
    <property type="interactions" value="6"/>
</dbReference>
<dbReference type="FunCoup" id="P54192">
    <property type="interactions" value="87"/>
</dbReference>
<dbReference type="IntAct" id="P54192">
    <property type="interactions" value="20"/>
</dbReference>
<dbReference type="STRING" id="7227.FBpp0076995"/>
<dbReference type="PaxDb" id="7227-FBpp0076995"/>
<dbReference type="DNASU" id="33040"/>
<dbReference type="EnsemblMetazoa" id="FBtr0077303">
    <property type="protein sequence ID" value="FBpp0076995"/>
    <property type="gene ID" value="FBgn0011280"/>
</dbReference>
<dbReference type="EnsemblMetazoa" id="FBtr0077304">
    <property type="protein sequence ID" value="FBpp0076996"/>
    <property type="gene ID" value="FBgn0011280"/>
</dbReference>
<dbReference type="GeneID" id="33040"/>
<dbReference type="KEGG" id="dme:Dmel_CG1668"/>
<dbReference type="AGR" id="FB:FBgn0011280"/>
<dbReference type="CTD" id="33040"/>
<dbReference type="FlyBase" id="FBgn0011280">
    <property type="gene designation" value="Obp19d"/>
</dbReference>
<dbReference type="VEuPathDB" id="VectorBase:FBgn0011280"/>
<dbReference type="eggNOG" id="ENOG502T2AN">
    <property type="taxonomic scope" value="Eukaryota"/>
</dbReference>
<dbReference type="GeneTree" id="ENSGT00520000058998"/>
<dbReference type="HOGENOM" id="CLU_148261_0_0_1"/>
<dbReference type="InParanoid" id="P54192"/>
<dbReference type="OMA" id="KCLRACM"/>
<dbReference type="OrthoDB" id="6595846at2759"/>
<dbReference type="PhylomeDB" id="P54192"/>
<dbReference type="BioGRID-ORCS" id="33040">
    <property type="hits" value="0 hits in 1 CRISPR screen"/>
</dbReference>
<dbReference type="ChiTaRS" id="Obp19d">
    <property type="organism name" value="fly"/>
</dbReference>
<dbReference type="GenomeRNAi" id="33040"/>
<dbReference type="PRO" id="PR:P54192"/>
<dbReference type="Proteomes" id="UP000000803">
    <property type="component" value="Chromosome X"/>
</dbReference>
<dbReference type="Bgee" id="FBgn0011280">
    <property type="expression patterns" value="Expressed in epithelial cell in antenna and 151 other cell types or tissues"/>
</dbReference>
<dbReference type="ExpressionAtlas" id="P54192">
    <property type="expression patterns" value="baseline and differential"/>
</dbReference>
<dbReference type="GO" id="GO:0005576">
    <property type="term" value="C:extracellular region"/>
    <property type="evidence" value="ECO:0000255"/>
    <property type="project" value="FlyBase"/>
</dbReference>
<dbReference type="GO" id="GO:0005615">
    <property type="term" value="C:extracellular space"/>
    <property type="evidence" value="ECO:0000318"/>
    <property type="project" value="GO_Central"/>
</dbReference>
<dbReference type="GO" id="GO:0005549">
    <property type="term" value="F:odorant binding"/>
    <property type="evidence" value="ECO:0000250"/>
    <property type="project" value="FlyBase"/>
</dbReference>
<dbReference type="GO" id="GO:0005550">
    <property type="term" value="F:pheromone binding"/>
    <property type="evidence" value="ECO:0000250"/>
    <property type="project" value="FlyBase"/>
</dbReference>
<dbReference type="GO" id="GO:0007606">
    <property type="term" value="P:sensory perception of chemical stimulus"/>
    <property type="evidence" value="ECO:0000250"/>
    <property type="project" value="FlyBase"/>
</dbReference>
<dbReference type="GO" id="GO:0007608">
    <property type="term" value="P:sensory perception of smell"/>
    <property type="evidence" value="ECO:0000318"/>
    <property type="project" value="GO_Central"/>
</dbReference>
<dbReference type="CDD" id="cd23992">
    <property type="entry name" value="PBP_GOBP"/>
    <property type="match status" value="1"/>
</dbReference>
<dbReference type="FunFam" id="1.10.238.20:FF:000006">
    <property type="entry name" value="Odorant binding protein 15"/>
    <property type="match status" value="1"/>
</dbReference>
<dbReference type="Gene3D" id="1.10.238.20">
    <property type="entry name" value="Pheromone/general odorant binding protein domain"/>
    <property type="match status" value="1"/>
</dbReference>
<dbReference type="InterPro" id="IPR006170">
    <property type="entry name" value="PBP/GOBP"/>
</dbReference>
<dbReference type="InterPro" id="IPR036728">
    <property type="entry name" value="PBP_GOBP_sf"/>
</dbReference>
<dbReference type="PANTHER" id="PTHR11857:SF42">
    <property type="entry name" value="GENERAL ODORANT-BINDING PROTEIN 19D-RELATED"/>
    <property type="match status" value="1"/>
</dbReference>
<dbReference type="PANTHER" id="PTHR11857">
    <property type="entry name" value="ODORANT BINDING PROTEIN-RELATED"/>
    <property type="match status" value="1"/>
</dbReference>
<dbReference type="Pfam" id="PF01395">
    <property type="entry name" value="PBP_GOBP"/>
    <property type="match status" value="1"/>
</dbReference>
<dbReference type="SMART" id="SM00708">
    <property type="entry name" value="PhBP"/>
    <property type="match status" value="1"/>
</dbReference>
<dbReference type="SUPFAM" id="SSF47565">
    <property type="entry name" value="Insect pheromone/odorant-binding proteins"/>
    <property type="match status" value="1"/>
</dbReference>
<organism>
    <name type="scientific">Drosophila melanogaster</name>
    <name type="common">Fruit fly</name>
    <dbReference type="NCBI Taxonomy" id="7227"/>
    <lineage>
        <taxon>Eukaryota</taxon>
        <taxon>Metazoa</taxon>
        <taxon>Ecdysozoa</taxon>
        <taxon>Arthropoda</taxon>
        <taxon>Hexapoda</taxon>
        <taxon>Insecta</taxon>
        <taxon>Pterygota</taxon>
        <taxon>Neoptera</taxon>
        <taxon>Endopterygota</taxon>
        <taxon>Diptera</taxon>
        <taxon>Brachycera</taxon>
        <taxon>Muscomorpha</taxon>
        <taxon>Ephydroidea</taxon>
        <taxon>Drosophilidae</taxon>
        <taxon>Drosophila</taxon>
        <taxon>Sophophora</taxon>
    </lineage>
</organism>
<comment type="interaction">
    <interactant intactId="EBI-26770067">
        <id>P54192</id>
    </interactant>
    <interactant intactId="EBI-149848">
        <id>P42325</id>
        <label>Nca</label>
    </interactant>
    <organismsDiffer>false</organismsDiffer>
    <experiments>4</experiments>
</comment>
<comment type="subcellular location">
    <subcellularLocation>
        <location evidence="4">Secreted</location>
    </subcellularLocation>
    <text evidence="4">Secreted in the lumen of olfactory hairs.</text>
</comment>
<comment type="tissue specificity">
    <text evidence="3">Expressed in the antenna, mostly on the anterior surface of the third antennal segment. Also detected in the maxillary palps and in cells at the bases of the taste hairs on the proboscis and internal taste organs of the head.</text>
</comment>
<comment type="similarity">
    <text evidence="4">Belongs to the PBP/GOBP family.</text>
</comment>
<comment type="sequence caution" evidence="4">
    <conflict type="erroneous initiation">
        <sequence resource="EMBL-CDS" id="ACD81686"/>
    </conflict>
    <text>Extended N-terminus.</text>
</comment>
<sequence>MSHLVHLTVLLLVGILCLGATSAKPHEEINRDHAAELANECKAETGATDEDVEQLMSHDLPERHEAKCLRACVMKKLQIMDESGKLNKEHAIELVKVMSKHDAEKEDAPAEVVAKCEAIETPEDHCDAAFAYEECIYEQMKEHGLELEEH</sequence>
<reference key="1">
    <citation type="journal article" date="1994" name="Neuron">
        <title>Members of a family of Drosophila putative odorant-binding proteins are expressed in different subsets of olfactory hairs.</title>
        <authorList>
            <person name="Pikielny C.W."/>
            <person name="Hasan G."/>
            <person name="Rouyer F."/>
            <person name="Rosbash M."/>
        </authorList>
    </citation>
    <scope>NUCLEOTIDE SEQUENCE [MRNA]</scope>
    <scope>TISSUE SPECIFICITY</scope>
    <source>
        <strain>Canton-S</strain>
        <tissue>Antenna</tissue>
    </source>
</reference>
<reference key="2">
    <citation type="journal article" date="2000" name="Science">
        <title>The genome sequence of Drosophila melanogaster.</title>
        <authorList>
            <person name="Adams M.D."/>
            <person name="Celniker S.E."/>
            <person name="Holt R.A."/>
            <person name="Evans C.A."/>
            <person name="Gocayne J.D."/>
            <person name="Amanatides P.G."/>
            <person name="Scherer S.E."/>
            <person name="Li P.W."/>
            <person name="Hoskins R.A."/>
            <person name="Galle R.F."/>
            <person name="George R.A."/>
            <person name="Lewis S.E."/>
            <person name="Richards S."/>
            <person name="Ashburner M."/>
            <person name="Henderson S.N."/>
            <person name="Sutton G.G."/>
            <person name="Wortman J.R."/>
            <person name="Yandell M.D."/>
            <person name="Zhang Q."/>
            <person name="Chen L.X."/>
            <person name="Brandon R.C."/>
            <person name="Rogers Y.-H.C."/>
            <person name="Blazej R.G."/>
            <person name="Champe M."/>
            <person name="Pfeiffer B.D."/>
            <person name="Wan K.H."/>
            <person name="Doyle C."/>
            <person name="Baxter E.G."/>
            <person name="Helt G."/>
            <person name="Nelson C.R."/>
            <person name="Miklos G.L.G."/>
            <person name="Abril J.F."/>
            <person name="Agbayani A."/>
            <person name="An H.-J."/>
            <person name="Andrews-Pfannkoch C."/>
            <person name="Baldwin D."/>
            <person name="Ballew R.M."/>
            <person name="Basu A."/>
            <person name="Baxendale J."/>
            <person name="Bayraktaroglu L."/>
            <person name="Beasley E.M."/>
            <person name="Beeson K.Y."/>
            <person name="Benos P.V."/>
            <person name="Berman B.P."/>
            <person name="Bhandari D."/>
            <person name="Bolshakov S."/>
            <person name="Borkova D."/>
            <person name="Botchan M.R."/>
            <person name="Bouck J."/>
            <person name="Brokstein P."/>
            <person name="Brottier P."/>
            <person name="Burtis K.C."/>
            <person name="Busam D.A."/>
            <person name="Butler H."/>
            <person name="Cadieu E."/>
            <person name="Center A."/>
            <person name="Chandra I."/>
            <person name="Cherry J.M."/>
            <person name="Cawley S."/>
            <person name="Dahlke C."/>
            <person name="Davenport L.B."/>
            <person name="Davies P."/>
            <person name="de Pablos B."/>
            <person name="Delcher A."/>
            <person name="Deng Z."/>
            <person name="Mays A.D."/>
            <person name="Dew I."/>
            <person name="Dietz S.M."/>
            <person name="Dodson K."/>
            <person name="Doup L.E."/>
            <person name="Downes M."/>
            <person name="Dugan-Rocha S."/>
            <person name="Dunkov B.C."/>
            <person name="Dunn P."/>
            <person name="Durbin K.J."/>
            <person name="Evangelista C.C."/>
            <person name="Ferraz C."/>
            <person name="Ferriera S."/>
            <person name="Fleischmann W."/>
            <person name="Fosler C."/>
            <person name="Gabrielian A.E."/>
            <person name="Garg N.S."/>
            <person name="Gelbart W.M."/>
            <person name="Glasser K."/>
            <person name="Glodek A."/>
            <person name="Gong F."/>
            <person name="Gorrell J.H."/>
            <person name="Gu Z."/>
            <person name="Guan P."/>
            <person name="Harris M."/>
            <person name="Harris N.L."/>
            <person name="Harvey D.A."/>
            <person name="Heiman T.J."/>
            <person name="Hernandez J.R."/>
            <person name="Houck J."/>
            <person name="Hostin D."/>
            <person name="Houston K.A."/>
            <person name="Howland T.J."/>
            <person name="Wei M.-H."/>
            <person name="Ibegwam C."/>
            <person name="Jalali M."/>
            <person name="Kalush F."/>
            <person name="Karpen G.H."/>
            <person name="Ke Z."/>
            <person name="Kennison J.A."/>
            <person name="Ketchum K.A."/>
            <person name="Kimmel B.E."/>
            <person name="Kodira C.D."/>
            <person name="Kraft C.L."/>
            <person name="Kravitz S."/>
            <person name="Kulp D."/>
            <person name="Lai Z."/>
            <person name="Lasko P."/>
            <person name="Lei Y."/>
            <person name="Levitsky A.A."/>
            <person name="Li J.H."/>
            <person name="Li Z."/>
            <person name="Liang Y."/>
            <person name="Lin X."/>
            <person name="Liu X."/>
            <person name="Mattei B."/>
            <person name="McIntosh T.C."/>
            <person name="McLeod M.P."/>
            <person name="McPherson D."/>
            <person name="Merkulov G."/>
            <person name="Milshina N.V."/>
            <person name="Mobarry C."/>
            <person name="Morris J."/>
            <person name="Moshrefi A."/>
            <person name="Mount S.M."/>
            <person name="Moy M."/>
            <person name="Murphy B."/>
            <person name="Murphy L."/>
            <person name="Muzny D.M."/>
            <person name="Nelson D.L."/>
            <person name="Nelson D.R."/>
            <person name="Nelson K.A."/>
            <person name="Nixon K."/>
            <person name="Nusskern D.R."/>
            <person name="Pacleb J.M."/>
            <person name="Palazzolo M."/>
            <person name="Pittman G.S."/>
            <person name="Pan S."/>
            <person name="Pollard J."/>
            <person name="Puri V."/>
            <person name="Reese M.G."/>
            <person name="Reinert K."/>
            <person name="Remington K."/>
            <person name="Saunders R.D.C."/>
            <person name="Scheeler F."/>
            <person name="Shen H."/>
            <person name="Shue B.C."/>
            <person name="Siden-Kiamos I."/>
            <person name="Simpson M."/>
            <person name="Skupski M.P."/>
            <person name="Smith T.J."/>
            <person name="Spier E."/>
            <person name="Spradling A.C."/>
            <person name="Stapleton M."/>
            <person name="Strong R."/>
            <person name="Sun E."/>
            <person name="Svirskas R."/>
            <person name="Tector C."/>
            <person name="Turner R."/>
            <person name="Venter E."/>
            <person name="Wang A.H."/>
            <person name="Wang X."/>
            <person name="Wang Z.-Y."/>
            <person name="Wassarman D.A."/>
            <person name="Weinstock G.M."/>
            <person name="Weissenbach J."/>
            <person name="Williams S.M."/>
            <person name="Woodage T."/>
            <person name="Worley K.C."/>
            <person name="Wu D."/>
            <person name="Yang S."/>
            <person name="Yao Q.A."/>
            <person name="Ye J."/>
            <person name="Yeh R.-F."/>
            <person name="Zaveri J.S."/>
            <person name="Zhan M."/>
            <person name="Zhang G."/>
            <person name="Zhao Q."/>
            <person name="Zheng L."/>
            <person name="Zheng X.H."/>
            <person name="Zhong F.N."/>
            <person name="Zhong W."/>
            <person name="Zhou X."/>
            <person name="Zhu S.C."/>
            <person name="Zhu X."/>
            <person name="Smith H.O."/>
            <person name="Gibbs R.A."/>
            <person name="Myers E.W."/>
            <person name="Rubin G.M."/>
            <person name="Venter J.C."/>
        </authorList>
    </citation>
    <scope>NUCLEOTIDE SEQUENCE [LARGE SCALE GENOMIC DNA]</scope>
    <source>
        <strain>Berkeley</strain>
    </source>
</reference>
<reference key="3">
    <citation type="journal article" date="2002" name="Genome Biol.">
        <title>Annotation of the Drosophila melanogaster euchromatic genome: a systematic review.</title>
        <authorList>
            <person name="Misra S."/>
            <person name="Crosby M.A."/>
            <person name="Mungall C.J."/>
            <person name="Matthews B.B."/>
            <person name="Campbell K.S."/>
            <person name="Hradecky P."/>
            <person name="Huang Y."/>
            <person name="Kaminker J.S."/>
            <person name="Millburn G.H."/>
            <person name="Prochnik S.E."/>
            <person name="Smith C.D."/>
            <person name="Tupy J.L."/>
            <person name="Whitfield E.J."/>
            <person name="Bayraktaroglu L."/>
            <person name="Berman B.P."/>
            <person name="Bettencourt B.R."/>
            <person name="Celniker S.E."/>
            <person name="de Grey A.D.N.J."/>
            <person name="Drysdale R.A."/>
            <person name="Harris N.L."/>
            <person name="Richter J."/>
            <person name="Russo S."/>
            <person name="Schroeder A.J."/>
            <person name="Shu S.Q."/>
            <person name="Stapleton M."/>
            <person name="Yamada C."/>
            <person name="Ashburner M."/>
            <person name="Gelbart W.M."/>
            <person name="Rubin G.M."/>
            <person name="Lewis S.E."/>
        </authorList>
    </citation>
    <scope>GENOME REANNOTATION</scope>
    <source>
        <strain>Berkeley</strain>
    </source>
</reference>
<reference key="4">
    <citation type="journal article" date="2002" name="Genome Biol.">
        <title>A Drosophila full-length cDNA resource.</title>
        <authorList>
            <person name="Stapleton M."/>
            <person name="Carlson J.W."/>
            <person name="Brokstein P."/>
            <person name="Yu C."/>
            <person name="Champe M."/>
            <person name="George R.A."/>
            <person name="Guarin H."/>
            <person name="Kronmiller B."/>
            <person name="Pacleb J.M."/>
            <person name="Park S."/>
            <person name="Wan K.H."/>
            <person name="Rubin G.M."/>
            <person name="Celniker S.E."/>
        </authorList>
    </citation>
    <scope>NUCLEOTIDE SEQUENCE [LARGE SCALE MRNA]</scope>
    <source>
        <strain>Berkeley</strain>
        <tissue>Head</tissue>
    </source>
</reference>
<reference key="5">
    <citation type="submission" date="2008-05" db="EMBL/GenBank/DDBJ databases">
        <authorList>
            <person name="Carlson J."/>
            <person name="Booth B."/>
            <person name="Frise E."/>
            <person name="Park S."/>
            <person name="Wan K."/>
            <person name="Yu C."/>
            <person name="Celniker S."/>
        </authorList>
    </citation>
    <scope>NUCLEOTIDE SEQUENCE [LARGE SCALE MRNA]</scope>
    <source>
        <strain>Berkeley</strain>
    </source>
</reference>
<name>OB19D_DROME</name>
<gene>
    <name type="primary">Obp19d</name>
    <name type="synonym">Pbprp2</name>
    <name type="ORF">CG1668</name>
</gene>